<sequence>MSKSSTCPITIKSINGRFQTTFGTIKQFNKMVELIDTNNTINLDMDSDRIEKILNYLRGYNCSLKLIAYDANKLGLDISYDGYVYINVGGRVYYVDKDFIKSKLEFFKIFFKYNNHCHPDYSGIVIDRDYRVFEKVLRHIKGKQNDNHNLSTELDYYGLNKPIHIIEPSYFNHYSMKKNMYVKIPSTIDDKNFYCKDDIETMIYLSYKYISLIVIFFEKEIPEDISGLQFYRFVGHGFGEYDKKSCGLKSISKSQNMILIHSIPYSTEHIKNNKNTKESYYHRPLELHVNKNLNIREVVFLEKMSIDKQPDNVTCIKDYFLFKKNFGSEGGLTDFVSFNLSEFLFVDYPQCAIKKMYLKSNSKISHVEIKCNNNLVLNSPVNYIGTKDIYRITFLTVSKSRLNLLIDNRTDLNFTVYFHRKCVDQLIFGYKILRL</sequence>
<reference key="1">
    <citation type="journal article" date="2004" name="Science">
        <title>The 1.2-megabase genome sequence of Mimivirus.</title>
        <authorList>
            <person name="Raoult D."/>
            <person name="Audic S."/>
            <person name="Robert C."/>
            <person name="Abergel C."/>
            <person name="Renesto P."/>
            <person name="Ogata H."/>
            <person name="La Scola B."/>
            <person name="Susan M."/>
            <person name="Claverie J.-M."/>
        </authorList>
    </citation>
    <scope>NUCLEOTIDE SEQUENCE [LARGE SCALE GENOMIC DNA]</scope>
    <source>
        <strain>Rowbotham-Bradford</strain>
    </source>
</reference>
<organism>
    <name type="scientific">Acanthamoeba polyphaga mimivirus</name>
    <name type="common">APMV</name>
    <dbReference type="NCBI Taxonomy" id="212035"/>
    <lineage>
        <taxon>Viruses</taxon>
        <taxon>Varidnaviria</taxon>
        <taxon>Bamfordvirae</taxon>
        <taxon>Nucleocytoviricota</taxon>
        <taxon>Megaviricetes</taxon>
        <taxon>Imitervirales</taxon>
        <taxon>Mimiviridae</taxon>
        <taxon>Megamimivirinae</taxon>
        <taxon>Mimivirus</taxon>
        <taxon>Mimivirus bradfordmassiliense</taxon>
    </lineage>
</organism>
<accession>Q5UPV9</accession>
<feature type="chain" id="PRO_0000247237" description="Putative BTB/POZ domain-containing protein L275">
    <location>
        <begin position="1"/>
        <end position="435"/>
    </location>
</feature>
<feature type="domain" description="BTB">
    <location>
        <begin position="80"/>
        <end position="149"/>
    </location>
</feature>
<protein>
    <recommendedName>
        <fullName>Putative BTB/POZ domain-containing protein L275</fullName>
    </recommendedName>
</protein>
<evidence type="ECO:0000305" key="1"/>
<gene>
    <name type="ordered locus">MIMI_L275</name>
</gene>
<proteinExistence type="inferred from homology"/>
<name>YL275_MIMIV</name>
<dbReference type="EMBL" id="AY653733">
    <property type="protein sequence ID" value="AAV50547.1"/>
    <property type="molecule type" value="Genomic_DNA"/>
</dbReference>
<dbReference type="SMR" id="Q5UPV9"/>
<dbReference type="KEGG" id="vg:9924886"/>
<dbReference type="OrthoDB" id="34553at10239"/>
<dbReference type="Proteomes" id="UP000001134">
    <property type="component" value="Genome"/>
</dbReference>
<dbReference type="GO" id="GO:0051260">
    <property type="term" value="P:protein homooligomerization"/>
    <property type="evidence" value="ECO:0007669"/>
    <property type="project" value="InterPro"/>
</dbReference>
<dbReference type="Gene3D" id="3.30.710.10">
    <property type="entry name" value="Potassium Channel Kv1.1, Chain A"/>
    <property type="match status" value="1"/>
</dbReference>
<dbReference type="InterPro" id="IPR011333">
    <property type="entry name" value="SKP1/BTB/POZ_sf"/>
</dbReference>
<dbReference type="InterPro" id="IPR003131">
    <property type="entry name" value="T1-type_BTB"/>
</dbReference>
<dbReference type="Pfam" id="PF02214">
    <property type="entry name" value="BTB_2"/>
    <property type="match status" value="1"/>
</dbReference>
<dbReference type="SUPFAM" id="SSF54695">
    <property type="entry name" value="POZ domain"/>
    <property type="match status" value="1"/>
</dbReference>
<organismHost>
    <name type="scientific">Acanthamoeba polyphaga</name>
    <name type="common">Amoeba</name>
    <dbReference type="NCBI Taxonomy" id="5757"/>
</organismHost>
<keyword id="KW-1185">Reference proteome</keyword>
<comment type="similarity">
    <text evidence="1">Belongs to the mimivirus BTB/WD family.</text>
</comment>